<keyword id="KW-0131">Cell cycle</keyword>
<keyword id="KW-0132">Cell division</keyword>
<keyword id="KW-0498">Mitosis</keyword>
<keyword id="KW-0539">Nucleus</keyword>
<keyword id="KW-1185">Reference proteome</keyword>
<keyword id="KW-0677">Repeat</keyword>
<proteinExistence type="evidence at transcript level"/>
<organism>
    <name type="scientific">Danio rerio</name>
    <name type="common">Zebrafish</name>
    <name type="synonym">Brachydanio rerio</name>
    <dbReference type="NCBI Taxonomy" id="7955"/>
    <lineage>
        <taxon>Eukaryota</taxon>
        <taxon>Metazoa</taxon>
        <taxon>Chordata</taxon>
        <taxon>Craniata</taxon>
        <taxon>Vertebrata</taxon>
        <taxon>Euteleostomi</taxon>
        <taxon>Actinopterygii</taxon>
        <taxon>Neopterygii</taxon>
        <taxon>Teleostei</taxon>
        <taxon>Ostariophysi</taxon>
        <taxon>Cypriniformes</taxon>
        <taxon>Danionidae</taxon>
        <taxon>Danioninae</taxon>
        <taxon>Danio</taxon>
    </lineage>
</organism>
<evidence type="ECO:0000250" key="1"/>
<evidence type="ECO:0000250" key="2">
    <source>
        <dbReference type="UniProtKB" id="Q29RF7"/>
    </source>
</evidence>
<evidence type="ECO:0000255" key="3"/>
<evidence type="ECO:0000256" key="4">
    <source>
        <dbReference type="SAM" id="MobiDB-lite"/>
    </source>
</evidence>
<evidence type="ECO:0000305" key="5"/>
<evidence type="ECO:0000312" key="6">
    <source>
        <dbReference type="EMBL" id="AAI29036.1"/>
    </source>
</evidence>
<gene>
    <name evidence="2" type="primary">pds5a</name>
    <name type="ORF">zgc:66331</name>
</gene>
<protein>
    <recommendedName>
        <fullName>Sister chromatid cohesion protein PDS5 homolog A</fullName>
    </recommendedName>
</protein>
<dbReference type="EMBL" id="BC129035">
    <property type="protein sequence ID" value="AAI29036.1"/>
    <property type="molecule type" value="mRNA"/>
</dbReference>
<dbReference type="RefSeq" id="NP_957286.2">
    <property type="nucleotide sequence ID" value="NM_200992.2"/>
</dbReference>
<dbReference type="SMR" id="A1L1F4"/>
<dbReference type="FunCoup" id="A1L1F4">
    <property type="interactions" value="2846"/>
</dbReference>
<dbReference type="STRING" id="7955.ENSDARP00000109877"/>
<dbReference type="PaxDb" id="7955-ENSDARP00000109877"/>
<dbReference type="PeptideAtlas" id="A1L1F4"/>
<dbReference type="GeneID" id="393967"/>
<dbReference type="KEGG" id="dre:393967"/>
<dbReference type="AGR" id="ZFIN:ZDB-GENE-040426-1612"/>
<dbReference type="CTD" id="23244"/>
<dbReference type="ZFIN" id="ZDB-GENE-040426-1612">
    <property type="gene designation" value="pds5a"/>
</dbReference>
<dbReference type="eggNOG" id="KOG1525">
    <property type="taxonomic scope" value="Eukaryota"/>
</dbReference>
<dbReference type="InParanoid" id="A1L1F4"/>
<dbReference type="OrthoDB" id="200660at2759"/>
<dbReference type="PhylomeDB" id="A1L1F4"/>
<dbReference type="Reactome" id="R-DRE-2468052">
    <property type="pathway name" value="Establishment of Sister Chromatid Cohesion"/>
</dbReference>
<dbReference type="Reactome" id="R-DRE-2500257">
    <property type="pathway name" value="Resolution of Sister Chromatid Cohesion"/>
</dbReference>
<dbReference type="PRO" id="PR:A1L1F4"/>
<dbReference type="Proteomes" id="UP000000437">
    <property type="component" value="Alternate scaffold 1"/>
</dbReference>
<dbReference type="Proteomes" id="UP000000437">
    <property type="component" value="Chromosome 1"/>
</dbReference>
<dbReference type="GO" id="GO:0000785">
    <property type="term" value="C:chromatin"/>
    <property type="evidence" value="ECO:0000318"/>
    <property type="project" value="GO_Central"/>
</dbReference>
<dbReference type="GO" id="GO:0005634">
    <property type="term" value="C:nucleus"/>
    <property type="evidence" value="ECO:0000318"/>
    <property type="project" value="GO_Central"/>
</dbReference>
<dbReference type="GO" id="GO:0051301">
    <property type="term" value="P:cell division"/>
    <property type="evidence" value="ECO:0007669"/>
    <property type="project" value="UniProtKB-KW"/>
</dbReference>
<dbReference type="GO" id="GO:0006281">
    <property type="term" value="P:DNA repair"/>
    <property type="evidence" value="ECO:0000318"/>
    <property type="project" value="GO_Central"/>
</dbReference>
<dbReference type="GO" id="GO:0007064">
    <property type="term" value="P:mitotic sister chromatid cohesion"/>
    <property type="evidence" value="ECO:0000318"/>
    <property type="project" value="GO_Central"/>
</dbReference>
<dbReference type="GO" id="GO:0008156">
    <property type="term" value="P:negative regulation of DNA replication"/>
    <property type="evidence" value="ECO:0000250"/>
    <property type="project" value="UniProtKB"/>
</dbReference>
<dbReference type="CDD" id="cd19953">
    <property type="entry name" value="PDS5"/>
    <property type="match status" value="1"/>
</dbReference>
<dbReference type="FunFam" id="1.25.10.10:FF:001146">
    <property type="entry name" value="PDS5 cohesin associated factor B"/>
    <property type="match status" value="1"/>
</dbReference>
<dbReference type="FunFam" id="1.25.10.10:FF:000064">
    <property type="entry name" value="Sister chromatid cohesion protein PDS5 homolog A"/>
    <property type="match status" value="1"/>
</dbReference>
<dbReference type="Gene3D" id="1.25.10.10">
    <property type="entry name" value="Leucine-rich Repeat Variant"/>
    <property type="match status" value="2"/>
</dbReference>
<dbReference type="InterPro" id="IPR011989">
    <property type="entry name" value="ARM-like"/>
</dbReference>
<dbReference type="InterPro" id="IPR016024">
    <property type="entry name" value="ARM-type_fold"/>
</dbReference>
<dbReference type="InterPro" id="IPR039776">
    <property type="entry name" value="Pds5"/>
</dbReference>
<dbReference type="PANTHER" id="PTHR12663">
    <property type="entry name" value="ANDROGEN INDUCED INHIBITOR OF PROLIFERATION AS3 / PDS5-RELATED"/>
    <property type="match status" value="1"/>
</dbReference>
<dbReference type="PANTHER" id="PTHR12663:SF2">
    <property type="entry name" value="SISTER CHROMATID COHESION PROTEIN PDS5 HOMOLOG A"/>
    <property type="match status" value="1"/>
</dbReference>
<dbReference type="Pfam" id="PF20168">
    <property type="entry name" value="PDS5"/>
    <property type="match status" value="1"/>
</dbReference>
<dbReference type="SUPFAM" id="SSF48371">
    <property type="entry name" value="ARM repeat"/>
    <property type="match status" value="1"/>
</dbReference>
<feature type="chain" id="PRO_0000296345" description="Sister chromatid cohesion protein PDS5 homolog A">
    <location>
        <begin position="1"/>
        <end position="1320"/>
    </location>
</feature>
<feature type="repeat" description="HEAT 1" evidence="3">
    <location>
        <begin position="156"/>
        <end position="195"/>
    </location>
</feature>
<feature type="repeat" description="HEAT 2" evidence="3">
    <location>
        <begin position="272"/>
        <end position="310"/>
    </location>
</feature>
<feature type="repeat" description="HEAT 3" evidence="3">
    <location>
        <begin position="388"/>
        <end position="426"/>
    </location>
</feature>
<feature type="repeat" description="HEAT 4" evidence="3">
    <location>
        <begin position="709"/>
        <end position="747"/>
    </location>
</feature>
<feature type="repeat" description="HEAT 5" evidence="3">
    <location>
        <begin position="990"/>
        <end position="1028"/>
    </location>
</feature>
<feature type="region of interest" description="Disordered" evidence="4">
    <location>
        <begin position="1158"/>
        <end position="1320"/>
    </location>
</feature>
<feature type="compositionally biased region" description="Polar residues" evidence="4">
    <location>
        <begin position="1158"/>
        <end position="1179"/>
    </location>
</feature>
<feature type="compositionally biased region" description="Basic and acidic residues" evidence="4">
    <location>
        <begin position="1180"/>
        <end position="1194"/>
    </location>
</feature>
<feature type="compositionally biased region" description="Polar residues" evidence="4">
    <location>
        <begin position="1225"/>
        <end position="1241"/>
    </location>
</feature>
<feature type="compositionally biased region" description="Low complexity" evidence="4">
    <location>
        <begin position="1255"/>
        <end position="1267"/>
    </location>
</feature>
<feature type="compositionally biased region" description="Polar residues" evidence="4">
    <location>
        <begin position="1283"/>
        <end position="1293"/>
    </location>
</feature>
<feature type="compositionally biased region" description="Basic and acidic residues" evidence="4">
    <location>
        <begin position="1294"/>
        <end position="1309"/>
    </location>
</feature>
<name>PDS5A_DANRE</name>
<accession>A1L1F4</accession>
<comment type="function">
    <text evidence="1">May regulate sister chromatid cohesion during mitosis and couple it to DNA replication.</text>
</comment>
<comment type="subunit">
    <text evidence="2">Interacts with the cohesin complex. Binds chromatin in a cohesin-dependent manner (By similarity).</text>
</comment>
<comment type="subcellular location">
    <subcellularLocation>
        <location evidence="2">Nucleus</location>
    </subcellularLocation>
</comment>
<comment type="similarity">
    <text evidence="5">Belongs to the PDS5 family.</text>
</comment>
<sequence>MEFPQQPQQQRPAGDGKITYPLGVKEITDKISNDEVVKRLKLVVKTYMDMDQDSEEEKQQYLALALHLASEFFLRNPNKDVRLLVACCLADIFRIYAPEAPYTSHDKLKEIFLFITRQLKGLEDTKSPQFNRYFYLLENLAWVKSYNICFELEDCNEIFIQLFKTLFSVINNSHNQKVQMHMLDLMSSIIMEGDGVTQELLDTILINLIPAHKNLNKQAYDLARTLLKRTVQTIETCIASFFNQVLVMGKSSVSDLSEHVFDLIQELFAIDPLLLVSVMPQLEFKLKSNDGEERLAVVKLLAKLFGAKDSELATQNRPLWQCFLGRFNDIHVPVRLECVKFASHCLMNHPDLAKDLTEFLKVRSHDPEEAIRHDVIVTIINAGKKDLNLVNDQLLGFVRERMLDKRWRVRKEAMMGLAQLFKKYCLHHEAGKESALKISWIKDKLLHIYYQNSIDDKLLVEKIFAQYMVPHSLETEEKMKCLYYLYACLDTNAVKALNEMWKCQNMLRGLVRELLDLHKLPTSEANTSAMFGKLMTIAKNLPDPGKAQDFMKKFNQVLGEDEKLRLQLEQLISPTCSCKQAEQCVREITRKLTFPKQPTNPFLEMVKFLLERIAPVHIDSEAISALVKLLNKSIEGTADDEDEGVTPDTAIRAGLELLKVLSFTHPTAFHSAETYESLLQCLKMEDDKVAEAAIQIFRNTGQKIETELPQIRSTLIPILHQKAKRGTPHQAKQAVHCIHAIFHNKEVQLAQIFEPLSRSLNADVPEQLITPLVSLGHISMLAPDQFASPMKSIVANFIVKDLLMNDRSVGNKNGRLWTADDEVSPEVLAKVQAIKLLVRWLLGMKNNQSKSANSTLRLPSAMLVSEGDLTEQKKISKSDMSRLRLAAGSAILKLAQEPCYHDIITPEQFQLCGLVINDECYQVRQIYAQKLHVALVKLLLPLEYMAVFALCAKDPVKERRAHARQCLLKNISVRREYIKQNPMAHEKLLSLLPEYVVPYMIHLLAHDPDLTKPQDLEQLRDVKECLWFMLEVLMTKNENNSHSFLRKMVENIKQTKDAQCPDDPKANEKLYIVCDVALFVIANKSTSCHLDSPKDPVLPSKFYTPPDKEFVNDKEYLSAEAKIVLQTGKIQQPPKQTGVLGAVNKPLTVTARRPYIKTFTSETGSNASTNSQPSSPATNKSRDVSSEVGARENEENPVITKAVSVKKEEAAQPSGRKRAAPASDGTENSVSSNPSAGSQPPLNKPRRGRPPKNSAGAATQEKEAGATTGAGAGRGRKRAAPSQDPSSTASTDALSDKTPKQQKEAEPKRAAPQRQIDLQR</sequence>
<reference evidence="6" key="1">
    <citation type="submission" date="2006-12" db="EMBL/GenBank/DDBJ databases">
        <authorList>
            <consortium name="NIH - Zebrafish Gene Collection (ZGC) project"/>
        </authorList>
    </citation>
    <scope>NUCLEOTIDE SEQUENCE [LARGE SCALE MRNA]</scope>
</reference>